<dbReference type="EC" id="3.4.24.-"/>
<dbReference type="EMBL" id="AB023659">
    <property type="protein sequence ID" value="BAB32589.1"/>
    <property type="molecule type" value="mRNA"/>
</dbReference>
<dbReference type="RefSeq" id="NP_113945.1">
    <property type="nucleotide sequence ID" value="NM_031757.1"/>
</dbReference>
<dbReference type="SMR" id="Q99PW6"/>
<dbReference type="FunCoup" id="Q99PW6">
    <property type="interactions" value="846"/>
</dbReference>
<dbReference type="STRING" id="10116.ENSRNOP00000075211"/>
<dbReference type="MEROPS" id="M10.023"/>
<dbReference type="PhosphoSitePlus" id="Q99PW6"/>
<dbReference type="PaxDb" id="10116-ENSRNOP00000067398"/>
<dbReference type="Ensembl" id="ENSRNOT00000092194.2">
    <property type="protein sequence ID" value="ENSRNOP00000075211.2"/>
    <property type="gene ID" value="ENSRNOG00000047028.3"/>
</dbReference>
<dbReference type="GeneID" id="83513"/>
<dbReference type="KEGG" id="rno:83513"/>
<dbReference type="AGR" id="RGD:620202"/>
<dbReference type="CTD" id="10893"/>
<dbReference type="RGD" id="620202">
    <property type="gene designation" value="Mmp24"/>
</dbReference>
<dbReference type="eggNOG" id="KOG1565">
    <property type="taxonomic scope" value="Eukaryota"/>
</dbReference>
<dbReference type="GeneTree" id="ENSGT00940000158315"/>
<dbReference type="InParanoid" id="Q99PW6"/>
<dbReference type="OMA" id="AMTQHYY"/>
<dbReference type="OrthoDB" id="406838at2759"/>
<dbReference type="PhylomeDB" id="Q99PW6"/>
<dbReference type="Reactome" id="R-RNO-1592389">
    <property type="pathway name" value="Activation of Matrix Metalloproteinases"/>
</dbReference>
<dbReference type="PRO" id="PR:Q99PW6"/>
<dbReference type="Proteomes" id="UP000002494">
    <property type="component" value="Chromosome 3"/>
</dbReference>
<dbReference type="GO" id="GO:0031012">
    <property type="term" value="C:extracellular matrix"/>
    <property type="evidence" value="ECO:0007669"/>
    <property type="project" value="InterPro"/>
</dbReference>
<dbReference type="GO" id="GO:0005615">
    <property type="term" value="C:extracellular space"/>
    <property type="evidence" value="ECO:0000318"/>
    <property type="project" value="GO_Central"/>
</dbReference>
<dbReference type="GO" id="GO:0005886">
    <property type="term" value="C:plasma membrane"/>
    <property type="evidence" value="ECO:0000250"/>
    <property type="project" value="UniProtKB"/>
</dbReference>
<dbReference type="GO" id="GO:0032588">
    <property type="term" value="C:trans-Golgi network membrane"/>
    <property type="evidence" value="ECO:0000250"/>
    <property type="project" value="UniProtKB"/>
</dbReference>
<dbReference type="GO" id="GO:0045296">
    <property type="term" value="F:cadherin binding"/>
    <property type="evidence" value="ECO:0000266"/>
    <property type="project" value="RGD"/>
</dbReference>
<dbReference type="GO" id="GO:0004222">
    <property type="term" value="F:metalloendopeptidase activity"/>
    <property type="evidence" value="ECO:0000250"/>
    <property type="project" value="UniProtKB"/>
</dbReference>
<dbReference type="GO" id="GO:0008233">
    <property type="term" value="F:peptidase activity"/>
    <property type="evidence" value="ECO:0000304"/>
    <property type="project" value="RGD"/>
</dbReference>
<dbReference type="GO" id="GO:0008270">
    <property type="term" value="F:zinc ion binding"/>
    <property type="evidence" value="ECO:0007669"/>
    <property type="project" value="InterPro"/>
</dbReference>
<dbReference type="GO" id="GO:0044331">
    <property type="term" value="P:cell-cell adhesion mediated by cadherin"/>
    <property type="evidence" value="ECO:0000250"/>
    <property type="project" value="UniProtKB"/>
</dbReference>
<dbReference type="GO" id="GO:0098742">
    <property type="term" value="P:cell-cell adhesion via plasma-membrane adhesion molecules"/>
    <property type="evidence" value="ECO:0000250"/>
    <property type="project" value="UniProtKB"/>
</dbReference>
<dbReference type="GO" id="GO:0030574">
    <property type="term" value="P:collagen catabolic process"/>
    <property type="evidence" value="ECO:0000318"/>
    <property type="project" value="GO_Central"/>
</dbReference>
<dbReference type="GO" id="GO:0050965">
    <property type="term" value="P:detection of temperature stimulus involved in sensory perception of pain"/>
    <property type="evidence" value="ECO:0000250"/>
    <property type="project" value="UniProtKB"/>
</dbReference>
<dbReference type="GO" id="GO:0030198">
    <property type="term" value="P:extracellular matrix organization"/>
    <property type="evidence" value="ECO:0000318"/>
    <property type="project" value="GO_Central"/>
</dbReference>
<dbReference type="GO" id="GO:0010001">
    <property type="term" value="P:glial cell differentiation"/>
    <property type="evidence" value="ECO:0000250"/>
    <property type="project" value="UniProtKB"/>
</dbReference>
<dbReference type="GO" id="GO:0097150">
    <property type="term" value="P:neuronal stem cell population maintenance"/>
    <property type="evidence" value="ECO:0000250"/>
    <property type="project" value="UniProtKB"/>
</dbReference>
<dbReference type="GO" id="GO:0006508">
    <property type="term" value="P:proteolysis"/>
    <property type="evidence" value="ECO:0000250"/>
    <property type="project" value="UniProtKB"/>
</dbReference>
<dbReference type="CDD" id="cd00094">
    <property type="entry name" value="HX"/>
    <property type="match status" value="1"/>
</dbReference>
<dbReference type="CDD" id="cd04278">
    <property type="entry name" value="ZnMc_MMP"/>
    <property type="match status" value="1"/>
</dbReference>
<dbReference type="FunFam" id="3.40.390.10:FF:000005">
    <property type="entry name" value="Matrix metallopeptidase 16"/>
    <property type="match status" value="1"/>
</dbReference>
<dbReference type="FunFam" id="2.110.10.10:FF:000001">
    <property type="entry name" value="Matrix metallopeptidase 24"/>
    <property type="match status" value="1"/>
</dbReference>
<dbReference type="Gene3D" id="3.40.390.10">
    <property type="entry name" value="Collagenase (Catalytic Domain)"/>
    <property type="match status" value="1"/>
</dbReference>
<dbReference type="Gene3D" id="2.110.10.10">
    <property type="entry name" value="Hemopexin-like domain"/>
    <property type="match status" value="1"/>
</dbReference>
<dbReference type="InterPro" id="IPR000585">
    <property type="entry name" value="Hemopexin-like_dom"/>
</dbReference>
<dbReference type="InterPro" id="IPR036375">
    <property type="entry name" value="Hemopexin-like_dom_sf"/>
</dbReference>
<dbReference type="InterPro" id="IPR018487">
    <property type="entry name" value="Hemopexin-like_repeat"/>
</dbReference>
<dbReference type="InterPro" id="IPR018486">
    <property type="entry name" value="Hemopexin_CS"/>
</dbReference>
<dbReference type="InterPro" id="IPR033739">
    <property type="entry name" value="M10A_MMP"/>
</dbReference>
<dbReference type="InterPro" id="IPR024079">
    <property type="entry name" value="MetalloPept_cat_dom_sf"/>
</dbReference>
<dbReference type="InterPro" id="IPR001818">
    <property type="entry name" value="Pept_M10_metallopeptidase"/>
</dbReference>
<dbReference type="InterPro" id="IPR021190">
    <property type="entry name" value="Pept_M10A"/>
</dbReference>
<dbReference type="InterPro" id="IPR021805">
    <property type="entry name" value="Pept_M10A_metallopeptidase_C"/>
</dbReference>
<dbReference type="InterPro" id="IPR006026">
    <property type="entry name" value="Peptidase_Metallo"/>
</dbReference>
<dbReference type="InterPro" id="IPR002477">
    <property type="entry name" value="Peptidoglycan-bd-like"/>
</dbReference>
<dbReference type="InterPro" id="IPR036365">
    <property type="entry name" value="PGBD-like_sf"/>
</dbReference>
<dbReference type="PANTHER" id="PTHR10201">
    <property type="entry name" value="MATRIX METALLOPROTEINASE"/>
    <property type="match status" value="1"/>
</dbReference>
<dbReference type="PANTHER" id="PTHR10201:SF138">
    <property type="entry name" value="MATRIX METALLOPROTEINASE-24"/>
    <property type="match status" value="1"/>
</dbReference>
<dbReference type="Pfam" id="PF11857">
    <property type="entry name" value="DUF3377"/>
    <property type="match status" value="1"/>
</dbReference>
<dbReference type="Pfam" id="PF00045">
    <property type="entry name" value="Hemopexin"/>
    <property type="match status" value="4"/>
</dbReference>
<dbReference type="Pfam" id="PF00413">
    <property type="entry name" value="Peptidase_M10"/>
    <property type="match status" value="1"/>
</dbReference>
<dbReference type="Pfam" id="PF01471">
    <property type="entry name" value="PG_binding_1"/>
    <property type="match status" value="1"/>
</dbReference>
<dbReference type="PIRSF" id="PIRSF001191">
    <property type="entry name" value="Peptidase_M10A_matrix"/>
    <property type="match status" value="1"/>
</dbReference>
<dbReference type="PRINTS" id="PR00138">
    <property type="entry name" value="MATRIXIN"/>
</dbReference>
<dbReference type="SMART" id="SM00120">
    <property type="entry name" value="HX"/>
    <property type="match status" value="4"/>
</dbReference>
<dbReference type="SMART" id="SM00235">
    <property type="entry name" value="ZnMc"/>
    <property type="match status" value="1"/>
</dbReference>
<dbReference type="SUPFAM" id="SSF50923">
    <property type="entry name" value="Hemopexin-like domain"/>
    <property type="match status" value="1"/>
</dbReference>
<dbReference type="SUPFAM" id="SSF55486">
    <property type="entry name" value="Metalloproteases ('zincins'), catalytic domain"/>
    <property type="match status" value="1"/>
</dbReference>
<dbReference type="SUPFAM" id="SSF47090">
    <property type="entry name" value="PGBD-like"/>
    <property type="match status" value="1"/>
</dbReference>
<dbReference type="PROSITE" id="PS00024">
    <property type="entry name" value="HEMOPEXIN"/>
    <property type="match status" value="1"/>
</dbReference>
<dbReference type="PROSITE" id="PS51642">
    <property type="entry name" value="HEMOPEXIN_2"/>
    <property type="match status" value="4"/>
</dbReference>
<dbReference type="PROSITE" id="PS00142">
    <property type="entry name" value="ZINC_PROTEASE"/>
    <property type="match status" value="1"/>
</dbReference>
<proteinExistence type="evidence at protein level"/>
<name>MMP24_RAT</name>
<keyword id="KW-0106">Calcium</keyword>
<keyword id="KW-0130">Cell adhesion</keyword>
<keyword id="KW-1003">Cell membrane</keyword>
<keyword id="KW-0165">Cleavage on pair of basic residues</keyword>
<keyword id="KW-1015">Disulfide bond</keyword>
<keyword id="KW-0272">Extracellular matrix</keyword>
<keyword id="KW-0333">Golgi apparatus</keyword>
<keyword id="KW-0378">Hydrolase</keyword>
<keyword id="KW-0472">Membrane</keyword>
<keyword id="KW-0479">Metal-binding</keyword>
<keyword id="KW-0482">Metalloprotease</keyword>
<keyword id="KW-0645">Protease</keyword>
<keyword id="KW-1185">Reference proteome</keyword>
<keyword id="KW-0677">Repeat</keyword>
<keyword id="KW-0964">Secreted</keyword>
<keyword id="KW-0732">Signal</keyword>
<keyword id="KW-0812">Transmembrane</keyword>
<keyword id="KW-1133">Transmembrane helix</keyword>
<keyword id="KW-0862">Zinc</keyword>
<keyword id="KW-0865">Zymogen</keyword>
<gene>
    <name type="primary">Mmp24</name>
    <name type="synonym">Mt5mmp</name>
</gene>
<evidence type="ECO:0000250" key="1"/>
<evidence type="ECO:0000255" key="2"/>
<evidence type="ECO:0000255" key="3">
    <source>
        <dbReference type="PROSITE-ProRule" id="PRU10095"/>
    </source>
</evidence>
<evidence type="ECO:0000256" key="4">
    <source>
        <dbReference type="SAM" id="MobiDB-lite"/>
    </source>
</evidence>
<evidence type="ECO:0000269" key="5">
    <source>
    </source>
</evidence>
<evidence type="ECO:0000269" key="6">
    <source>
    </source>
</evidence>
<evidence type="ECO:0000305" key="7"/>
<accession>Q99PW6</accession>
<organism>
    <name type="scientific">Rattus norvegicus</name>
    <name type="common">Rat</name>
    <dbReference type="NCBI Taxonomy" id="10116"/>
    <lineage>
        <taxon>Eukaryota</taxon>
        <taxon>Metazoa</taxon>
        <taxon>Chordata</taxon>
        <taxon>Craniata</taxon>
        <taxon>Vertebrata</taxon>
        <taxon>Euteleostomi</taxon>
        <taxon>Mammalia</taxon>
        <taxon>Eutheria</taxon>
        <taxon>Euarchontoglires</taxon>
        <taxon>Glires</taxon>
        <taxon>Rodentia</taxon>
        <taxon>Myomorpha</taxon>
        <taxon>Muroidea</taxon>
        <taxon>Muridae</taxon>
        <taxon>Murinae</taxon>
        <taxon>Rattus</taxon>
    </lineage>
</organism>
<protein>
    <recommendedName>
        <fullName>Matrix metalloproteinase-24</fullName>
        <shortName>MMP-24</shortName>
        <ecNumber>3.4.24.-</ecNumber>
    </recommendedName>
    <alternativeName>
        <fullName>Membrane-type matrix metalloproteinase 5</fullName>
        <shortName>MT-MMP 5</shortName>
        <shortName>MTMMP5</shortName>
    </alternativeName>
    <alternativeName>
        <fullName>Membrane-type-5 matrix metalloproteinase</fullName>
        <shortName>MT5-MMP</shortName>
        <shortName>MT5MMP</shortName>
    </alternativeName>
    <component>
        <recommendedName>
            <fullName>Processed matrix metalloproteinase-24</fullName>
        </recommendedName>
    </component>
</protein>
<reference key="1">
    <citation type="submission" date="1999-02" db="EMBL/GenBank/DDBJ databases">
        <title>Molecular cloning and characterization of rat MT5-MMP.</title>
        <authorList>
            <person name="Sekine-Aizawa Y."/>
        </authorList>
    </citation>
    <scope>NUCLEOTIDE SEQUENCE [MRNA]</scope>
    <source>
        <tissue>Brain</tissue>
    </source>
</reference>
<reference key="2">
    <citation type="journal article" date="2000" name="Brain Res.">
        <title>Developmental regulation of membrane type-5 matrix metalloproteinase (MT5-MMP) expression in the rat nervous system.</title>
        <authorList>
            <person name="Jaworski D.M."/>
        </authorList>
    </citation>
    <scope>TISSUE SPECIFICITY</scope>
    <scope>DEVELOPMENTAL STAGE</scope>
</reference>
<reference key="3">
    <citation type="journal article" date="2006" name="J. Neurosci.">
        <title>Membrane localization of membrane type 5 matrix metalloproteinase by AMPA receptor binding protein and cleavage of cadherins.</title>
        <authorList>
            <person name="Monea S."/>
            <person name="Jordan B.A."/>
            <person name="Srivastava S."/>
            <person name="DeSouza S."/>
            <person name="Ziff E.B."/>
        </authorList>
    </citation>
    <scope>FUNCTION</scope>
    <scope>SUBCELLULAR LOCATION</scope>
    <scope>PROTEOLYTIC PROCESSING</scope>
    <scope>INTERACTION WITH GRIP1 AND GRIP2</scope>
    <scope>MUTAGENESIS OF 616-GLU--VAL-618</scope>
</reference>
<feature type="signal peptide" evidence="2">
    <location>
        <begin position="1"/>
        <end position="41"/>
    </location>
</feature>
<feature type="propeptide" id="PRO_0000028850" evidence="1">
    <location>
        <begin position="42"/>
        <end position="128"/>
    </location>
</feature>
<feature type="chain" id="PRO_0000028851" description="Matrix metalloproteinase-24">
    <location>
        <begin position="129"/>
        <end position="618"/>
    </location>
</feature>
<feature type="chain" id="PRO_0000302760" description="Processed matrix metalloproteinase-24" evidence="1">
    <location>
        <begin position="129"/>
        <end position="554"/>
    </location>
</feature>
<feature type="topological domain" description="Extracellular" evidence="2">
    <location>
        <begin position="42"/>
        <end position="575"/>
    </location>
</feature>
<feature type="transmembrane region" description="Helical" evidence="2">
    <location>
        <begin position="576"/>
        <end position="596"/>
    </location>
</feature>
<feature type="topological domain" description="Cytoplasmic" evidence="2">
    <location>
        <begin position="597"/>
        <end position="618"/>
    </location>
</feature>
<feature type="repeat" description="Hemopexin 1">
    <location>
        <begin position="350"/>
        <end position="398"/>
    </location>
</feature>
<feature type="repeat" description="Hemopexin 2">
    <location>
        <begin position="399"/>
        <end position="444"/>
    </location>
</feature>
<feature type="repeat" description="Hemopexin 3">
    <location>
        <begin position="446"/>
        <end position="494"/>
    </location>
</feature>
<feature type="repeat" description="Hemopexin 4">
    <location>
        <begin position="495"/>
        <end position="542"/>
    </location>
</feature>
<feature type="region of interest" description="Disordered" evidence="4">
    <location>
        <begin position="296"/>
        <end position="352"/>
    </location>
</feature>
<feature type="short sequence motif" description="Cysteine switch" evidence="1">
    <location>
        <begin position="110"/>
        <end position="117"/>
    </location>
</feature>
<feature type="short sequence motif" description="PDZ-binding">
    <location>
        <begin position="616"/>
        <end position="618"/>
    </location>
</feature>
<feature type="compositionally biased region" description="Pro residues" evidence="4">
    <location>
        <begin position="302"/>
        <end position="314"/>
    </location>
</feature>
<feature type="compositionally biased region" description="Basic and acidic residues" evidence="4">
    <location>
        <begin position="322"/>
        <end position="332"/>
    </location>
</feature>
<feature type="active site" evidence="3">
    <location>
        <position position="256"/>
    </location>
</feature>
<feature type="binding site" description="in inhibited form" evidence="1">
    <location>
        <position position="112"/>
    </location>
    <ligand>
        <name>Zn(2+)</name>
        <dbReference type="ChEBI" id="CHEBI:29105"/>
        <note>catalytic</note>
    </ligand>
</feature>
<feature type="binding site" evidence="3">
    <location>
        <position position="255"/>
    </location>
    <ligand>
        <name>Zn(2+)</name>
        <dbReference type="ChEBI" id="CHEBI:29105"/>
        <note>catalytic</note>
    </ligand>
</feature>
<feature type="binding site" evidence="3">
    <location>
        <position position="259"/>
    </location>
    <ligand>
        <name>Zn(2+)</name>
        <dbReference type="ChEBI" id="CHEBI:29105"/>
        <note>catalytic</note>
    </ligand>
</feature>
<feature type="binding site" evidence="3">
    <location>
        <position position="265"/>
    </location>
    <ligand>
        <name>Zn(2+)</name>
        <dbReference type="ChEBI" id="CHEBI:29105"/>
        <note>catalytic</note>
    </ligand>
</feature>
<feature type="site" description="Cleavage; by furin" evidence="1">
    <location>
        <begin position="554"/>
        <end position="555"/>
    </location>
</feature>
<feature type="disulfide bond" evidence="1">
    <location>
        <begin position="353"/>
        <end position="542"/>
    </location>
</feature>
<feature type="mutagenesis site" description="Impaired interaction with GRIP1 and GRIP2." evidence="6">
    <location>
        <begin position="616"/>
        <end position="618"/>
    </location>
</feature>
<comment type="function">
    <text evidence="6">Metalloprotease that mediates cleavage of N-cadherin (CDH2) and acts as a regulator of neuro-immune interactions and neural stem cell quiescence. Involved in cell-cell interactions between nociceptive neurites and mast cells, possibly by mediating cleavage of CDH2, thereby acting as a mediator of peripheral thermal nociception and inflammatory hyperalgesia. Key regulator of neural stem cells quiescence by mediating cleavage of CDH2, affecting CDH2-mediated anchorage of neural stem cells to ependymocytes in the adult subependymal zone, leading to modulate their quiescence. May play a role in axonal growth. Able to activate progelatinase A. May also be a proteoglycanase involved in degradation of proteoglycans, such as dermatan sulfate and chondroitin sulfate proteoglycans. Cleaves partially fibronectin, but not collagen type I, nor laminin.</text>
</comment>
<comment type="cofactor">
    <cofactor evidence="1">
        <name>Zn(2+)</name>
        <dbReference type="ChEBI" id="CHEBI:29105"/>
    </cofactor>
    <text evidence="1">Binds 1 zinc ion per subunit.</text>
</comment>
<comment type="cofactor">
    <cofactor evidence="1">
        <name>Ca(2+)</name>
        <dbReference type="ChEBI" id="CHEBI:29108"/>
    </cofactor>
</comment>
<comment type="subunit">
    <text evidence="1 6">Interacts (via PDZ-binding motif) with APBA3 (via PDZ domain) (By similarity). Interacts with GRIP1 and GRIP2.</text>
</comment>
<comment type="subcellular location">
    <molecule>Matrix metalloproteinase-24</molecule>
    <subcellularLocation>
        <location>Cell membrane</location>
        <topology>Single-pass type I membrane protein</topology>
    </subcellularLocation>
    <subcellularLocation>
        <location evidence="1">Golgi apparatus</location>
        <location evidence="1">trans-Golgi network membrane</location>
        <topology evidence="1">Single-pass type I membrane protein</topology>
    </subcellularLocation>
    <text evidence="1">Recycled back to the plasma membrane through the trans-Golgi network via interaction with APBA3.</text>
</comment>
<comment type="subcellular location">
    <molecule>Processed matrix metalloproteinase-24</molecule>
    <subcellularLocation>
        <location evidence="1">Secreted</location>
        <location evidence="1">Extracellular space</location>
        <location evidence="1">Extracellular matrix</location>
    </subcellularLocation>
    <text evidence="1">Also shed from cell surface as soluble proteinase, by a proteolytic cleavage.</text>
</comment>
<comment type="tissue specificity">
    <text evidence="5">Predominantly expressed in the nervous system: while enriched in the central nervous system, expression is also detected in the peripheral nervous system, including the trigeminal ganglion. Expression is not restricted to the nervous system: it is also enriched in the thymus, with a lower level of expression present in the aorta. In brain, high expression is present in the brain parenchyma, particularly within the neocortex.</text>
</comment>
<comment type="developmental stage">
    <text evidence="5">Expression is first detected in embryonic day 16 (16 dpc) brain, strongly increases at 20 dpc, and peaks within 24 hours of birth. The postnatal expression declines steadily to reach adult levels at P60.</text>
</comment>
<comment type="domain">
    <text evidence="6">The PDZ-binding motif (also named EWV motif) is required for interaction with PDZ domains of APBA3 and recycling through the trans-Golgi network.</text>
</comment>
<comment type="domain">
    <text>The conserved cysteine present in the cysteine-switch motif binds the catalytic zinc ion, thus inhibiting the enzyme. The dissociation of the cysteine from the zinc ion upon the activation-peptide release activates the enzyme.</text>
</comment>
<comment type="PTM">
    <text>Cleaved by a furin endopeptidase in the trans-Golgi network.</text>
</comment>
<comment type="similarity">
    <text evidence="7">Belongs to the peptidase M10A family.</text>
</comment>
<sequence length="618" mass="70465">MPRSRGGRAAPGQAARWSGWRAPGRLLPLLPALCCLAAAAGAGKPAGADAPFAGQNWLKSYGYLLPYESRASALHSGKALQSAVSTMQQFYGIPVTGVLDQTTIEWMKKPRCGVPDHPHLSRRRRNKRYALTGQKWRQKHITYSIHNYTPKVGELDTRKAIRQAFDVWQKVTPLTFEEVPYHEIKSDRKEADIMIFFASGFHGDSSPFDGEGGFLAHAYFPGPGIGGDTHFDSDEPWTLGNANHDGNDLFLVAVHELGHALGLEHSNDPSAIMAPFYQYMETHNFKLPQDDLQGIQKIYGPPAEPLEPTRPLPTLPVRRIHSPSERKHERQPRPPRPPLGDRPSTPGAKPNICDGNFNTVALFRGEMFVFKDRWFWRLRNNRVQEGYPMQIEQFWKGLPARIDAAYERADGRFVFFKGDKYWVFKEVTVEPGYPHSLGELGSCLPREGIDTALRWEPVGKTYFFKGERYWRYSEERRATDPGYPKPITVWKGIPQAPQGAFISKEGYYTYFYKGRDYWKFDNQKLSVEPGYPRNILRDWMGCKQKEVERRKERRLPQDDVDIMVTIDDVPGSVNAVAVVVPCTLSLCLLVLLYTIFQFKNKTGPQPVTYYKRPVQEWV</sequence>